<organism>
    <name type="scientific">Mus musculus</name>
    <name type="common">Mouse</name>
    <dbReference type="NCBI Taxonomy" id="10090"/>
    <lineage>
        <taxon>Eukaryota</taxon>
        <taxon>Metazoa</taxon>
        <taxon>Chordata</taxon>
        <taxon>Craniata</taxon>
        <taxon>Vertebrata</taxon>
        <taxon>Euteleostomi</taxon>
        <taxon>Mammalia</taxon>
        <taxon>Eutheria</taxon>
        <taxon>Euarchontoglires</taxon>
        <taxon>Glires</taxon>
        <taxon>Rodentia</taxon>
        <taxon>Myomorpha</taxon>
        <taxon>Muroidea</taxon>
        <taxon>Muridae</taxon>
        <taxon>Murinae</taxon>
        <taxon>Mus</taxon>
        <taxon>Mus</taxon>
    </lineage>
</organism>
<reference key="1">
    <citation type="journal article" date="2005" name="Science">
        <title>The transcriptional landscape of the mammalian genome.</title>
        <authorList>
            <person name="Carninci P."/>
            <person name="Kasukawa T."/>
            <person name="Katayama S."/>
            <person name="Gough J."/>
            <person name="Frith M.C."/>
            <person name="Maeda N."/>
            <person name="Oyama R."/>
            <person name="Ravasi T."/>
            <person name="Lenhard B."/>
            <person name="Wells C."/>
            <person name="Kodzius R."/>
            <person name="Shimokawa K."/>
            <person name="Bajic V.B."/>
            <person name="Brenner S.E."/>
            <person name="Batalov S."/>
            <person name="Forrest A.R."/>
            <person name="Zavolan M."/>
            <person name="Davis M.J."/>
            <person name="Wilming L.G."/>
            <person name="Aidinis V."/>
            <person name="Allen J.E."/>
            <person name="Ambesi-Impiombato A."/>
            <person name="Apweiler R."/>
            <person name="Aturaliya R.N."/>
            <person name="Bailey T.L."/>
            <person name="Bansal M."/>
            <person name="Baxter L."/>
            <person name="Beisel K.W."/>
            <person name="Bersano T."/>
            <person name="Bono H."/>
            <person name="Chalk A.M."/>
            <person name="Chiu K.P."/>
            <person name="Choudhary V."/>
            <person name="Christoffels A."/>
            <person name="Clutterbuck D.R."/>
            <person name="Crowe M.L."/>
            <person name="Dalla E."/>
            <person name="Dalrymple B.P."/>
            <person name="de Bono B."/>
            <person name="Della Gatta G."/>
            <person name="di Bernardo D."/>
            <person name="Down T."/>
            <person name="Engstrom P."/>
            <person name="Fagiolini M."/>
            <person name="Faulkner G."/>
            <person name="Fletcher C.F."/>
            <person name="Fukushima T."/>
            <person name="Furuno M."/>
            <person name="Futaki S."/>
            <person name="Gariboldi M."/>
            <person name="Georgii-Hemming P."/>
            <person name="Gingeras T.R."/>
            <person name="Gojobori T."/>
            <person name="Green R.E."/>
            <person name="Gustincich S."/>
            <person name="Harbers M."/>
            <person name="Hayashi Y."/>
            <person name="Hensch T.K."/>
            <person name="Hirokawa N."/>
            <person name="Hill D."/>
            <person name="Huminiecki L."/>
            <person name="Iacono M."/>
            <person name="Ikeo K."/>
            <person name="Iwama A."/>
            <person name="Ishikawa T."/>
            <person name="Jakt M."/>
            <person name="Kanapin A."/>
            <person name="Katoh M."/>
            <person name="Kawasawa Y."/>
            <person name="Kelso J."/>
            <person name="Kitamura H."/>
            <person name="Kitano H."/>
            <person name="Kollias G."/>
            <person name="Krishnan S.P."/>
            <person name="Kruger A."/>
            <person name="Kummerfeld S.K."/>
            <person name="Kurochkin I.V."/>
            <person name="Lareau L.F."/>
            <person name="Lazarevic D."/>
            <person name="Lipovich L."/>
            <person name="Liu J."/>
            <person name="Liuni S."/>
            <person name="McWilliam S."/>
            <person name="Madan Babu M."/>
            <person name="Madera M."/>
            <person name="Marchionni L."/>
            <person name="Matsuda H."/>
            <person name="Matsuzawa S."/>
            <person name="Miki H."/>
            <person name="Mignone F."/>
            <person name="Miyake S."/>
            <person name="Morris K."/>
            <person name="Mottagui-Tabar S."/>
            <person name="Mulder N."/>
            <person name="Nakano N."/>
            <person name="Nakauchi H."/>
            <person name="Ng P."/>
            <person name="Nilsson R."/>
            <person name="Nishiguchi S."/>
            <person name="Nishikawa S."/>
            <person name="Nori F."/>
            <person name="Ohara O."/>
            <person name="Okazaki Y."/>
            <person name="Orlando V."/>
            <person name="Pang K.C."/>
            <person name="Pavan W.J."/>
            <person name="Pavesi G."/>
            <person name="Pesole G."/>
            <person name="Petrovsky N."/>
            <person name="Piazza S."/>
            <person name="Reed J."/>
            <person name="Reid J.F."/>
            <person name="Ring B.Z."/>
            <person name="Ringwald M."/>
            <person name="Rost B."/>
            <person name="Ruan Y."/>
            <person name="Salzberg S.L."/>
            <person name="Sandelin A."/>
            <person name="Schneider C."/>
            <person name="Schoenbach C."/>
            <person name="Sekiguchi K."/>
            <person name="Semple C.A."/>
            <person name="Seno S."/>
            <person name="Sessa L."/>
            <person name="Sheng Y."/>
            <person name="Shibata Y."/>
            <person name="Shimada H."/>
            <person name="Shimada K."/>
            <person name="Silva D."/>
            <person name="Sinclair B."/>
            <person name="Sperling S."/>
            <person name="Stupka E."/>
            <person name="Sugiura K."/>
            <person name="Sultana R."/>
            <person name="Takenaka Y."/>
            <person name="Taki K."/>
            <person name="Tammoja K."/>
            <person name="Tan S.L."/>
            <person name="Tang S."/>
            <person name="Taylor M.S."/>
            <person name="Tegner J."/>
            <person name="Teichmann S.A."/>
            <person name="Ueda H.R."/>
            <person name="van Nimwegen E."/>
            <person name="Verardo R."/>
            <person name="Wei C.L."/>
            <person name="Yagi K."/>
            <person name="Yamanishi H."/>
            <person name="Zabarovsky E."/>
            <person name="Zhu S."/>
            <person name="Zimmer A."/>
            <person name="Hide W."/>
            <person name="Bult C."/>
            <person name="Grimmond S.M."/>
            <person name="Teasdale R.D."/>
            <person name="Liu E.T."/>
            <person name="Brusic V."/>
            <person name="Quackenbush J."/>
            <person name="Wahlestedt C."/>
            <person name="Mattick J.S."/>
            <person name="Hume D.A."/>
            <person name="Kai C."/>
            <person name="Sasaki D."/>
            <person name="Tomaru Y."/>
            <person name="Fukuda S."/>
            <person name="Kanamori-Katayama M."/>
            <person name="Suzuki M."/>
            <person name="Aoki J."/>
            <person name="Arakawa T."/>
            <person name="Iida J."/>
            <person name="Imamura K."/>
            <person name="Itoh M."/>
            <person name="Kato T."/>
            <person name="Kawaji H."/>
            <person name="Kawagashira N."/>
            <person name="Kawashima T."/>
            <person name="Kojima M."/>
            <person name="Kondo S."/>
            <person name="Konno H."/>
            <person name="Nakano K."/>
            <person name="Ninomiya N."/>
            <person name="Nishio T."/>
            <person name="Okada M."/>
            <person name="Plessy C."/>
            <person name="Shibata K."/>
            <person name="Shiraki T."/>
            <person name="Suzuki S."/>
            <person name="Tagami M."/>
            <person name="Waki K."/>
            <person name="Watahiki A."/>
            <person name="Okamura-Oho Y."/>
            <person name="Suzuki H."/>
            <person name="Kawai J."/>
            <person name="Hayashizaki Y."/>
        </authorList>
    </citation>
    <scope>NUCLEOTIDE SEQUENCE [LARGE SCALE MRNA]</scope>
    <source>
        <strain>C57BL/6J</strain>
        <tissue>Bone marrow</tissue>
    </source>
</reference>
<reference key="2">
    <citation type="journal article" date="2004" name="Genome Res.">
        <title>The status, quality, and expansion of the NIH full-length cDNA project: the Mammalian Gene Collection (MGC).</title>
        <authorList>
            <consortium name="The MGC Project Team"/>
        </authorList>
    </citation>
    <scope>NUCLEOTIDE SEQUENCE [LARGE SCALE MRNA]</scope>
    <source>
        <strain>FVB/N</strain>
        <tissue>Mammary tumor</tissue>
    </source>
</reference>
<reference key="3">
    <citation type="journal article" date="2018" name="Physiol. Genomics">
        <title>The impact of PYROXD1 deficiency on cellular respiration and correlations with genetic analyses of limb-girdle muscular dystrophy in Saudi Arabia and Sudan.</title>
        <authorList>
            <person name="Saha M."/>
            <person name="Reddy H.M."/>
            <person name="Salih M."/>
            <person name="Estrella E."/>
            <person name="Jones M.D."/>
            <person name="Mitsuhashi S."/>
            <person name="Cho K.A."/>
            <person name="Suzuki-Hatano S."/>
            <person name="Rizzo S.A."/>
            <person name="Hamad M.H."/>
            <person name="Mukhtar M.M."/>
            <person name="Hamed A.A."/>
            <person name="Elseed M.A."/>
            <person name="Lek M."/>
            <person name="Valkanas E."/>
            <person name="MacArthur D.G."/>
            <person name="Kunkel L.M."/>
            <person name="Pacak C.A."/>
            <person name="Draper I."/>
            <person name="Kang P.B."/>
        </authorList>
    </citation>
    <scope>SUBCELLULAR LOCATION</scope>
</reference>
<name>PYRD1_MOUSE</name>
<gene>
    <name type="primary">Pyroxd1</name>
</gene>
<proteinExistence type="evidence at transcript level"/>
<evidence type="ECO:0000250" key="1">
    <source>
        <dbReference type="UniProtKB" id="O52582"/>
    </source>
</evidence>
<evidence type="ECO:0000250" key="2">
    <source>
        <dbReference type="UniProtKB" id="Q6PBT5"/>
    </source>
</evidence>
<evidence type="ECO:0000250" key="3">
    <source>
        <dbReference type="UniProtKB" id="Q8WU10"/>
    </source>
</evidence>
<evidence type="ECO:0000269" key="4">
    <source>
    </source>
</evidence>
<evidence type="ECO:0000305" key="5"/>
<comment type="function">
    <text evidence="2 3">Probable FAD-dependent oxidoreductase; involved in the cellular oxidative stress response (By similarity). Required for normal sarcomere structure and muscle fiber integrity (By similarity).</text>
</comment>
<comment type="cofactor">
    <cofactor evidence="1">
        <name>FAD</name>
        <dbReference type="ChEBI" id="CHEBI:57692"/>
    </cofactor>
    <text evidence="1">Binds 1 FAD per subunit.</text>
</comment>
<comment type="subcellular location">
    <subcellularLocation>
        <location evidence="4">Nucleus</location>
    </subcellularLocation>
    <subcellularLocation>
        <location evidence="4">Cytoplasm</location>
    </subcellularLocation>
    <subcellularLocation>
        <location evidence="3">Cytoplasm</location>
        <location evidence="3">Myofibril</location>
        <location evidence="3">Sarcomere</location>
    </subcellularLocation>
</comment>
<comment type="similarity">
    <text evidence="5">Belongs to the class-I pyridine nucleotide-disulfide oxidoreductase family. PYROXD1 subfamily.</text>
</comment>
<protein>
    <recommendedName>
        <fullName>Pyridine nucleotide-disulfide oxidoreductase domain-containing protein 1</fullName>
        <ecNumber>1.8.1.-</ecNumber>
    </recommendedName>
</protein>
<keyword id="KW-0007">Acetylation</keyword>
<keyword id="KW-0963">Cytoplasm</keyword>
<keyword id="KW-0274">FAD</keyword>
<keyword id="KW-0285">Flavoprotein</keyword>
<keyword id="KW-0521">NADP</keyword>
<keyword id="KW-0539">Nucleus</keyword>
<keyword id="KW-0560">Oxidoreductase</keyword>
<keyword id="KW-1185">Reference proteome</keyword>
<feature type="chain" id="PRO_0000327420" description="Pyridine nucleotide-disulfide oxidoreductase domain-containing protein 1">
    <location>
        <begin position="1"/>
        <end position="498"/>
    </location>
</feature>
<feature type="modified residue" description="N-acetylmethionine" evidence="3">
    <location>
        <position position="1"/>
    </location>
</feature>
<feature type="sequence conflict" description="In Ref. 1; BAE28538 and 2; AAH27061." evidence="5" ref="1 2">
    <original>T</original>
    <variation>I</variation>
    <location>
        <position position="68"/>
    </location>
</feature>
<feature type="sequence conflict" description="In Ref. 1; BAE28538 and 2; AAH27061." evidence="5" ref="1 2">
    <original>I</original>
    <variation>T</variation>
    <location>
        <position position="203"/>
    </location>
</feature>
<feature type="sequence conflict" description="In Ref. 1; BAE28538." evidence="5" ref="1">
    <original>L</original>
    <variation>F</variation>
    <location>
        <position position="277"/>
    </location>
</feature>
<feature type="sequence conflict" description="In Ref. 1; BAE28538 and 2; AAH27061." evidence="5" ref="1 2">
    <original>T</original>
    <variation>K</variation>
    <location>
        <position position="304"/>
    </location>
</feature>
<sequence length="498" mass="55592">MEAPRPAGTFVVVGGGIAGVTCAEQLAVSFPEEDILLVTASPVIKAVTNFRQVSKVLEEFDVEEQPGTMLESRFPNIKVIESGVKQLKSEDHCIFTEDGREFVYKKLCLCAGAKPKLIYEGNPRVLGIRDTDSAQEFQKELAKARRIMIVGNGGIALELAYEIEGCEVVWAIKDNAIGNTFFDAGAAEFLTSKLMSEKSEAKIAHKRTIYTVEEAKKETRTKSKADYVGSALGPDWHGGLALKGTEEFSHSVHIETRCEVKKIYLEEEFKIMKKKSLAFPKDHHKSVTADKEMWPVYVELTNGTIYGCDFLVSATGVTPNVHPFLHRNNFALGEDGGLRVDDQMRTSLPDIYAAGDICTACWQPSPVWQQMRLWTQARQMGYYAAKCMAAASMGHPIDMDFSFELFAHVTKFFNYKVVLLGKYNAQGLGADHELMLRCTRGQEYVKVVMQNGRMMGAVLIGETDLEETFENLILNQMDLSSYGEDLLDPNIDIEDYFD</sequence>
<dbReference type="EC" id="1.8.1.-"/>
<dbReference type="EMBL" id="AK148411">
    <property type="protein sequence ID" value="BAE28538.1"/>
    <property type="molecule type" value="mRNA"/>
</dbReference>
<dbReference type="EMBL" id="AK165677">
    <property type="protein sequence ID" value="BAE38333.1"/>
    <property type="molecule type" value="mRNA"/>
</dbReference>
<dbReference type="EMBL" id="BC027061">
    <property type="protein sequence ID" value="AAH27061.1"/>
    <property type="molecule type" value="mRNA"/>
</dbReference>
<dbReference type="CCDS" id="CCDS20681.1"/>
<dbReference type="RefSeq" id="NP_898988.2">
    <property type="nucleotide sequence ID" value="NM_183165.4"/>
</dbReference>
<dbReference type="SMR" id="Q3TMV7"/>
<dbReference type="FunCoup" id="Q3TMV7">
    <property type="interactions" value="3015"/>
</dbReference>
<dbReference type="STRING" id="10090.ENSMUSP00000036394"/>
<dbReference type="PhosphoSitePlus" id="Q3TMV7"/>
<dbReference type="jPOST" id="Q3TMV7"/>
<dbReference type="PaxDb" id="10090-ENSMUSP00000036394"/>
<dbReference type="PeptideAtlas" id="Q3TMV7"/>
<dbReference type="ProteomicsDB" id="301956"/>
<dbReference type="Pumba" id="Q3TMV7"/>
<dbReference type="Antibodypedia" id="49414">
    <property type="antibodies" value="63 antibodies from 20 providers"/>
</dbReference>
<dbReference type="DNASU" id="232491"/>
<dbReference type="Ensembl" id="ENSMUST00000041852.8">
    <property type="protein sequence ID" value="ENSMUSP00000036394.8"/>
    <property type="gene ID" value="ENSMUSG00000041671.14"/>
</dbReference>
<dbReference type="GeneID" id="232491"/>
<dbReference type="KEGG" id="mmu:232491"/>
<dbReference type="UCSC" id="uc009epc.1">
    <property type="organism name" value="mouse"/>
</dbReference>
<dbReference type="AGR" id="MGI:2676395"/>
<dbReference type="CTD" id="79912"/>
<dbReference type="MGI" id="MGI:2676395">
    <property type="gene designation" value="Pyroxd1"/>
</dbReference>
<dbReference type="VEuPathDB" id="HostDB:ENSMUSG00000041671"/>
<dbReference type="eggNOG" id="KOG2755">
    <property type="taxonomic scope" value="Eukaryota"/>
</dbReference>
<dbReference type="GeneTree" id="ENSGT00390000014894"/>
<dbReference type="HOGENOM" id="CLU_026335_0_0_1"/>
<dbReference type="InParanoid" id="Q3TMV7"/>
<dbReference type="OMA" id="MCENLIL"/>
<dbReference type="OrthoDB" id="202203at2759"/>
<dbReference type="PhylomeDB" id="Q3TMV7"/>
<dbReference type="TreeFam" id="TF105963"/>
<dbReference type="BioGRID-ORCS" id="232491">
    <property type="hits" value="22 hits in 77 CRISPR screens"/>
</dbReference>
<dbReference type="ChiTaRS" id="Pyroxd1">
    <property type="organism name" value="mouse"/>
</dbReference>
<dbReference type="PRO" id="PR:Q3TMV7"/>
<dbReference type="Proteomes" id="UP000000589">
    <property type="component" value="Chromosome 6"/>
</dbReference>
<dbReference type="RNAct" id="Q3TMV7">
    <property type="molecule type" value="protein"/>
</dbReference>
<dbReference type="Bgee" id="ENSMUSG00000041671">
    <property type="expression patterns" value="Expressed in embryonic post-anal tail and 174 other cell types or tissues"/>
</dbReference>
<dbReference type="GO" id="GO:0005737">
    <property type="term" value="C:cytoplasm"/>
    <property type="evidence" value="ECO:0000314"/>
    <property type="project" value="UniProtKB"/>
</dbReference>
<dbReference type="GO" id="GO:0005634">
    <property type="term" value="C:nucleus"/>
    <property type="evidence" value="ECO:0000314"/>
    <property type="project" value="UniProtKB"/>
</dbReference>
<dbReference type="GO" id="GO:0030017">
    <property type="term" value="C:sarcomere"/>
    <property type="evidence" value="ECO:0000250"/>
    <property type="project" value="UniProtKB"/>
</dbReference>
<dbReference type="GO" id="GO:0016491">
    <property type="term" value="F:oxidoreductase activity"/>
    <property type="evidence" value="ECO:0007669"/>
    <property type="project" value="UniProtKB-KW"/>
</dbReference>
<dbReference type="GO" id="GO:0034599">
    <property type="term" value="P:cellular response to oxidative stress"/>
    <property type="evidence" value="ECO:0000250"/>
    <property type="project" value="UniProtKB"/>
</dbReference>
<dbReference type="FunFam" id="3.30.390.30:FF:000009">
    <property type="entry name" value="Pyridine nucleotide-disulfide oxidoreductase domain-containing protein 1"/>
    <property type="match status" value="1"/>
</dbReference>
<dbReference type="FunFam" id="3.50.50.60:FF:000181">
    <property type="entry name" value="Pyridine nucleotide-disulfide oxidoreductase domain-containing protein 1"/>
    <property type="match status" value="1"/>
</dbReference>
<dbReference type="Gene3D" id="3.30.390.30">
    <property type="match status" value="1"/>
</dbReference>
<dbReference type="Gene3D" id="3.50.50.60">
    <property type="entry name" value="FAD/NAD(P)-binding domain"/>
    <property type="match status" value="3"/>
</dbReference>
<dbReference type="InterPro" id="IPR050260">
    <property type="entry name" value="FAD-bd_OxRdtase"/>
</dbReference>
<dbReference type="InterPro" id="IPR036188">
    <property type="entry name" value="FAD/NAD-bd_sf"/>
</dbReference>
<dbReference type="InterPro" id="IPR023753">
    <property type="entry name" value="FAD/NAD-binding_dom"/>
</dbReference>
<dbReference type="InterPro" id="IPR016156">
    <property type="entry name" value="FAD/NAD-linked_Rdtase_dimer_sf"/>
</dbReference>
<dbReference type="InterPro" id="IPR041575">
    <property type="entry name" value="Rubredoxin_C"/>
</dbReference>
<dbReference type="PANTHER" id="PTHR43429">
    <property type="entry name" value="PYRIDINE NUCLEOTIDE-DISULFIDE OXIDOREDUCTASE DOMAIN-CONTAINING"/>
    <property type="match status" value="1"/>
</dbReference>
<dbReference type="PANTHER" id="PTHR43429:SF2">
    <property type="entry name" value="PYRIDINE NUCLEOTIDE-DISULFIDE OXIDOREDUCTASE DOMAIN-CONTAINING PROTEIN 1"/>
    <property type="match status" value="1"/>
</dbReference>
<dbReference type="Pfam" id="PF07992">
    <property type="entry name" value="Pyr_redox_2"/>
    <property type="match status" value="2"/>
</dbReference>
<dbReference type="Pfam" id="PF18267">
    <property type="entry name" value="Rubredoxin_C"/>
    <property type="match status" value="1"/>
</dbReference>
<dbReference type="PRINTS" id="PR00368">
    <property type="entry name" value="FADPNR"/>
</dbReference>
<dbReference type="SUPFAM" id="SSF51905">
    <property type="entry name" value="FAD/NAD(P)-binding domain"/>
    <property type="match status" value="2"/>
</dbReference>
<accession>Q3TMV7</accession>
<accession>Q3UFM2</accession>
<accession>Q8R2X5</accession>